<protein>
    <recommendedName>
        <fullName evidence="1">Large ribosomal subunit protein bL35</fullName>
    </recommendedName>
    <alternativeName>
        <fullName evidence="3">50S ribosomal protein L35</fullName>
    </alternativeName>
</protein>
<sequence length="66" mass="7501">MPKLKTKSSVKKRFSVTATGKIKSTQSAKRHGMTKRSKRSIRVQRGTAIMNSSDSRIVKLFMPYSR</sequence>
<feature type="chain" id="PRO_0000258674" description="Large ribosomal subunit protein bL35">
    <location>
        <begin position="1"/>
        <end position="66"/>
    </location>
</feature>
<feature type="region of interest" description="Disordered" evidence="2">
    <location>
        <begin position="20"/>
        <end position="40"/>
    </location>
</feature>
<feature type="compositionally biased region" description="Basic residues" evidence="2">
    <location>
        <begin position="28"/>
        <end position="40"/>
    </location>
</feature>
<gene>
    <name evidence="1" type="primary">rpmI</name>
    <name type="ordered locus">ECH_0198</name>
</gene>
<keyword id="KW-1185">Reference proteome</keyword>
<keyword id="KW-0687">Ribonucleoprotein</keyword>
<keyword id="KW-0689">Ribosomal protein</keyword>
<dbReference type="EMBL" id="CP000236">
    <property type="protein sequence ID" value="ABD44820.1"/>
    <property type="molecule type" value="Genomic_DNA"/>
</dbReference>
<dbReference type="RefSeq" id="WP_011452451.1">
    <property type="nucleotide sequence ID" value="NC_007799.1"/>
</dbReference>
<dbReference type="SMR" id="Q2GHR1"/>
<dbReference type="STRING" id="205920.ECH_0198"/>
<dbReference type="KEGG" id="ech:ECH_0198"/>
<dbReference type="eggNOG" id="COG0291">
    <property type="taxonomic scope" value="Bacteria"/>
</dbReference>
<dbReference type="HOGENOM" id="CLU_169643_2_1_5"/>
<dbReference type="OrthoDB" id="9804851at2"/>
<dbReference type="Proteomes" id="UP000008320">
    <property type="component" value="Chromosome"/>
</dbReference>
<dbReference type="GO" id="GO:0022625">
    <property type="term" value="C:cytosolic large ribosomal subunit"/>
    <property type="evidence" value="ECO:0007669"/>
    <property type="project" value="TreeGrafter"/>
</dbReference>
<dbReference type="GO" id="GO:0003735">
    <property type="term" value="F:structural constituent of ribosome"/>
    <property type="evidence" value="ECO:0007669"/>
    <property type="project" value="InterPro"/>
</dbReference>
<dbReference type="GO" id="GO:0006412">
    <property type="term" value="P:translation"/>
    <property type="evidence" value="ECO:0007669"/>
    <property type="project" value="UniProtKB-UniRule"/>
</dbReference>
<dbReference type="FunFam" id="4.10.410.60:FF:000001">
    <property type="entry name" value="50S ribosomal protein L35"/>
    <property type="match status" value="1"/>
</dbReference>
<dbReference type="Gene3D" id="4.10.410.60">
    <property type="match status" value="1"/>
</dbReference>
<dbReference type="HAMAP" id="MF_00514">
    <property type="entry name" value="Ribosomal_bL35"/>
    <property type="match status" value="1"/>
</dbReference>
<dbReference type="InterPro" id="IPR001706">
    <property type="entry name" value="Ribosomal_bL35"/>
</dbReference>
<dbReference type="InterPro" id="IPR021137">
    <property type="entry name" value="Ribosomal_bL35-like"/>
</dbReference>
<dbReference type="InterPro" id="IPR018265">
    <property type="entry name" value="Ribosomal_bL35_CS"/>
</dbReference>
<dbReference type="InterPro" id="IPR037229">
    <property type="entry name" value="Ribosomal_bL35_sf"/>
</dbReference>
<dbReference type="NCBIfam" id="TIGR00001">
    <property type="entry name" value="rpmI_bact"/>
    <property type="match status" value="1"/>
</dbReference>
<dbReference type="PANTHER" id="PTHR33343">
    <property type="entry name" value="54S RIBOSOMAL PROTEIN BL35M"/>
    <property type="match status" value="1"/>
</dbReference>
<dbReference type="PANTHER" id="PTHR33343:SF1">
    <property type="entry name" value="LARGE RIBOSOMAL SUBUNIT PROTEIN BL35M"/>
    <property type="match status" value="1"/>
</dbReference>
<dbReference type="Pfam" id="PF01632">
    <property type="entry name" value="Ribosomal_L35p"/>
    <property type="match status" value="1"/>
</dbReference>
<dbReference type="PRINTS" id="PR00064">
    <property type="entry name" value="RIBOSOMALL35"/>
</dbReference>
<dbReference type="SUPFAM" id="SSF143034">
    <property type="entry name" value="L35p-like"/>
    <property type="match status" value="1"/>
</dbReference>
<dbReference type="PROSITE" id="PS00936">
    <property type="entry name" value="RIBOSOMAL_L35"/>
    <property type="match status" value="1"/>
</dbReference>
<organism>
    <name type="scientific">Ehrlichia chaffeensis (strain ATCC CRL-10679 / Arkansas)</name>
    <dbReference type="NCBI Taxonomy" id="205920"/>
    <lineage>
        <taxon>Bacteria</taxon>
        <taxon>Pseudomonadati</taxon>
        <taxon>Pseudomonadota</taxon>
        <taxon>Alphaproteobacteria</taxon>
        <taxon>Rickettsiales</taxon>
        <taxon>Anaplasmataceae</taxon>
        <taxon>Ehrlichia</taxon>
    </lineage>
</organism>
<accession>Q2GHR1</accession>
<reference key="1">
    <citation type="journal article" date="2006" name="PLoS Genet.">
        <title>Comparative genomics of emerging human ehrlichiosis agents.</title>
        <authorList>
            <person name="Dunning Hotopp J.C."/>
            <person name="Lin M."/>
            <person name="Madupu R."/>
            <person name="Crabtree J."/>
            <person name="Angiuoli S.V."/>
            <person name="Eisen J.A."/>
            <person name="Seshadri R."/>
            <person name="Ren Q."/>
            <person name="Wu M."/>
            <person name="Utterback T.R."/>
            <person name="Smith S."/>
            <person name="Lewis M."/>
            <person name="Khouri H."/>
            <person name="Zhang C."/>
            <person name="Niu H."/>
            <person name="Lin Q."/>
            <person name="Ohashi N."/>
            <person name="Zhi N."/>
            <person name="Nelson W.C."/>
            <person name="Brinkac L.M."/>
            <person name="Dodson R.J."/>
            <person name="Rosovitz M.J."/>
            <person name="Sundaram J.P."/>
            <person name="Daugherty S.C."/>
            <person name="Davidsen T."/>
            <person name="Durkin A.S."/>
            <person name="Gwinn M.L."/>
            <person name="Haft D.H."/>
            <person name="Selengut J.D."/>
            <person name="Sullivan S.A."/>
            <person name="Zafar N."/>
            <person name="Zhou L."/>
            <person name="Benahmed F."/>
            <person name="Forberger H."/>
            <person name="Halpin R."/>
            <person name="Mulligan S."/>
            <person name="Robinson J."/>
            <person name="White O."/>
            <person name="Rikihisa Y."/>
            <person name="Tettelin H."/>
        </authorList>
    </citation>
    <scope>NUCLEOTIDE SEQUENCE [LARGE SCALE GENOMIC DNA]</scope>
    <source>
        <strain>ATCC CRL-10679 / Arkansas</strain>
    </source>
</reference>
<name>RL35_EHRCR</name>
<comment type="similarity">
    <text evidence="1">Belongs to the bacterial ribosomal protein bL35 family.</text>
</comment>
<proteinExistence type="inferred from homology"/>
<evidence type="ECO:0000255" key="1">
    <source>
        <dbReference type="HAMAP-Rule" id="MF_00514"/>
    </source>
</evidence>
<evidence type="ECO:0000256" key="2">
    <source>
        <dbReference type="SAM" id="MobiDB-lite"/>
    </source>
</evidence>
<evidence type="ECO:0000305" key="3"/>